<reference key="1">
    <citation type="journal article" date="1999" name="DNA Res.">
        <title>Complete genome sequence of an aerobic hyper-thermophilic crenarchaeon, Aeropyrum pernix K1.</title>
        <authorList>
            <person name="Kawarabayasi Y."/>
            <person name="Hino Y."/>
            <person name="Horikawa H."/>
            <person name="Yamazaki S."/>
            <person name="Haikawa Y."/>
            <person name="Jin-no K."/>
            <person name="Takahashi M."/>
            <person name="Sekine M."/>
            <person name="Baba S."/>
            <person name="Ankai A."/>
            <person name="Kosugi H."/>
            <person name="Hosoyama A."/>
            <person name="Fukui S."/>
            <person name="Nagai Y."/>
            <person name="Nishijima K."/>
            <person name="Nakazawa H."/>
            <person name="Takamiya M."/>
            <person name="Masuda S."/>
            <person name="Funahashi T."/>
            <person name="Tanaka T."/>
            <person name="Kudoh Y."/>
            <person name="Yamazaki J."/>
            <person name="Kushida N."/>
            <person name="Oguchi A."/>
            <person name="Aoki K."/>
            <person name="Kubota K."/>
            <person name="Nakamura Y."/>
            <person name="Nomura N."/>
            <person name="Sako Y."/>
            <person name="Kikuchi H."/>
        </authorList>
    </citation>
    <scope>NUCLEOTIDE SEQUENCE [LARGE SCALE GENOMIC DNA]</scope>
    <source>
        <strain>ATCC 700893 / DSM 11879 / JCM 9820 / NBRC 100138 / K1</strain>
    </source>
</reference>
<reference key="2">
    <citation type="unpublished observations" date="2003-03">
        <authorList>
            <person name="Medigue C."/>
            <person name="Bocs S."/>
        </authorList>
    </citation>
    <scope>IDENTIFICATION</scope>
</reference>
<name>RL39_AERPE</name>
<feature type="chain" id="PRO_0000127045" description="Large ribosomal subunit protein eL39">
    <location>
        <begin position="1"/>
        <end position="51"/>
    </location>
</feature>
<gene>
    <name type="primary">rpl39e</name>
    <name type="ordered locus">APE_1087a</name>
</gene>
<sequence>MARNKPLGRKLRLARALKSNRAIPVWVVIRTSRRIRFNLLRRHWRRSKLKV</sequence>
<accession>P59472</accession>
<accession>Q05E30</accession>
<keyword id="KW-1185">Reference proteome</keyword>
<keyword id="KW-0687">Ribonucleoprotein</keyword>
<keyword id="KW-0689">Ribosomal protein</keyword>
<comment type="similarity">
    <text evidence="1">Belongs to the eukaryotic ribosomal protein eL39 family.</text>
</comment>
<organism>
    <name type="scientific">Aeropyrum pernix (strain ATCC 700893 / DSM 11879 / JCM 9820 / NBRC 100138 / K1)</name>
    <dbReference type="NCBI Taxonomy" id="272557"/>
    <lineage>
        <taxon>Archaea</taxon>
        <taxon>Thermoproteota</taxon>
        <taxon>Thermoprotei</taxon>
        <taxon>Desulfurococcales</taxon>
        <taxon>Desulfurococcaceae</taxon>
        <taxon>Aeropyrum</taxon>
    </lineage>
</organism>
<proteinExistence type="inferred from homology"/>
<evidence type="ECO:0000305" key="1"/>
<protein>
    <recommendedName>
        <fullName evidence="1">Large ribosomal subunit protein eL39</fullName>
    </recommendedName>
    <alternativeName>
        <fullName>50S ribosomal protein L39e</fullName>
    </alternativeName>
</protein>
<dbReference type="EMBL" id="BA000002">
    <property type="protein sequence ID" value="BAF34771.1"/>
    <property type="molecule type" value="Genomic_DNA"/>
</dbReference>
<dbReference type="RefSeq" id="WP_010866165.1">
    <property type="nucleotide sequence ID" value="NC_000854.2"/>
</dbReference>
<dbReference type="STRING" id="272557.APE_1087a"/>
<dbReference type="EnsemblBacteria" id="BAF34771">
    <property type="protein sequence ID" value="BAF34771"/>
    <property type="gene ID" value="APE_1087a"/>
</dbReference>
<dbReference type="GeneID" id="1445556"/>
<dbReference type="KEGG" id="ape:APE_1087a"/>
<dbReference type="PATRIC" id="fig|272557.25.peg.763"/>
<dbReference type="eggNOG" id="arCOG04177">
    <property type="taxonomic scope" value="Archaea"/>
</dbReference>
<dbReference type="Proteomes" id="UP000002518">
    <property type="component" value="Chromosome"/>
</dbReference>
<dbReference type="GO" id="GO:1990904">
    <property type="term" value="C:ribonucleoprotein complex"/>
    <property type="evidence" value="ECO:0007669"/>
    <property type="project" value="UniProtKB-KW"/>
</dbReference>
<dbReference type="GO" id="GO:0005840">
    <property type="term" value="C:ribosome"/>
    <property type="evidence" value="ECO:0007669"/>
    <property type="project" value="UniProtKB-KW"/>
</dbReference>
<dbReference type="GO" id="GO:0003735">
    <property type="term" value="F:structural constituent of ribosome"/>
    <property type="evidence" value="ECO:0007669"/>
    <property type="project" value="InterPro"/>
</dbReference>
<dbReference type="GO" id="GO:0006412">
    <property type="term" value="P:translation"/>
    <property type="evidence" value="ECO:0007669"/>
    <property type="project" value="UniProtKB-UniRule"/>
</dbReference>
<dbReference type="FunFam" id="1.10.1620.10:FF:000001">
    <property type="entry name" value="60S ribosomal protein-like L39"/>
    <property type="match status" value="1"/>
</dbReference>
<dbReference type="Gene3D" id="1.10.1620.10">
    <property type="entry name" value="Ribosomal protein L39e"/>
    <property type="match status" value="1"/>
</dbReference>
<dbReference type="HAMAP" id="MF_00629">
    <property type="entry name" value="Ribosomal_eL39"/>
    <property type="match status" value="1"/>
</dbReference>
<dbReference type="InterPro" id="IPR000077">
    <property type="entry name" value="Ribosomal_eL39"/>
</dbReference>
<dbReference type="InterPro" id="IPR020083">
    <property type="entry name" value="Ribosomal_eL39_CS"/>
</dbReference>
<dbReference type="InterPro" id="IPR023626">
    <property type="entry name" value="Ribosomal_eL39_dom_sf"/>
</dbReference>
<dbReference type="NCBIfam" id="NF002316">
    <property type="entry name" value="PRK01242.1"/>
    <property type="match status" value="1"/>
</dbReference>
<dbReference type="Pfam" id="PF00832">
    <property type="entry name" value="Ribosomal_L39"/>
    <property type="match status" value="1"/>
</dbReference>
<dbReference type="SUPFAM" id="SSF48662">
    <property type="entry name" value="Ribosomal protein L39e"/>
    <property type="match status" value="1"/>
</dbReference>
<dbReference type="PROSITE" id="PS00051">
    <property type="entry name" value="RIBOSOMAL_L39E"/>
    <property type="match status" value="1"/>
</dbReference>